<feature type="chain" id="PRO_1000099395" description="DNA repair protein RecO">
    <location>
        <begin position="1"/>
        <end position="249"/>
    </location>
</feature>
<proteinExistence type="inferred from homology"/>
<protein>
    <recommendedName>
        <fullName evidence="1">DNA repair protein RecO</fullName>
    </recommendedName>
    <alternativeName>
        <fullName evidence="1">Recombination protein O</fullName>
    </alternativeName>
</protein>
<keyword id="KW-0227">DNA damage</keyword>
<keyword id="KW-0233">DNA recombination</keyword>
<keyword id="KW-0234">DNA repair</keyword>
<keyword id="KW-1185">Reference proteome</keyword>
<gene>
    <name evidence="1" type="primary">recO</name>
    <name type="ordered locus">OCAR_5846</name>
    <name type="ordered locus">OCA5_c21710</name>
</gene>
<sequence length="249" mass="27129">MEWTDDGIILGTRRHGEANAIVELLTRSHGRHLGLVRGGAGTRMRPLLQPGNSVGAVWRARLDEHLGYYALEGTRLRAATMLSYSHAAYGITHLAALARLLPERAPHDGIYEQFEAILEDFDDPVIAATHVVRFEMAMLEELGFGLDLSCCAATGTHTDLIYVSPKSGCAVSRSAGEPWRERLLPLPAFLRAGNEESSPDGEADIMEGFRLTGMFLLRNVLEPRGQAHSDARAGFIAAVARSRVTLAAE</sequence>
<comment type="function">
    <text evidence="1">Involved in DNA repair and RecF pathway recombination.</text>
</comment>
<comment type="similarity">
    <text evidence="1">Belongs to the RecO family.</text>
</comment>
<organism>
    <name type="scientific">Afipia carboxidovorans (strain ATCC 49405 / DSM 1227 / KCTC 32145 / OM5)</name>
    <name type="common">Oligotropha carboxidovorans</name>
    <dbReference type="NCBI Taxonomy" id="504832"/>
    <lineage>
        <taxon>Bacteria</taxon>
        <taxon>Pseudomonadati</taxon>
        <taxon>Pseudomonadota</taxon>
        <taxon>Alphaproteobacteria</taxon>
        <taxon>Hyphomicrobiales</taxon>
        <taxon>Nitrobacteraceae</taxon>
        <taxon>Afipia</taxon>
    </lineage>
</organism>
<accession>B6JGG5</accession>
<accession>F8BXN7</accession>
<reference key="1">
    <citation type="journal article" date="2008" name="J. Bacteriol.">
        <title>Genome sequence of the chemolithoautotrophic bacterium Oligotropha carboxidovorans OM5T.</title>
        <authorList>
            <person name="Paul D."/>
            <person name="Bridges S."/>
            <person name="Burgess S.C."/>
            <person name="Dandass Y."/>
            <person name="Lawrence M.L."/>
        </authorList>
    </citation>
    <scope>NUCLEOTIDE SEQUENCE [LARGE SCALE GENOMIC DNA]</scope>
    <source>
        <strain>ATCC 49405 / DSM 1227 / KCTC 32145 / OM5</strain>
    </source>
</reference>
<reference key="2">
    <citation type="journal article" date="2011" name="J. Bacteriol.">
        <title>Complete genome sequences of the chemolithoautotrophic Oligotropha carboxidovorans strains OM4 and OM5.</title>
        <authorList>
            <person name="Volland S."/>
            <person name="Rachinger M."/>
            <person name="Strittmatter A."/>
            <person name="Daniel R."/>
            <person name="Gottschalk G."/>
            <person name="Meyer O."/>
        </authorList>
    </citation>
    <scope>NUCLEOTIDE SEQUENCE [LARGE SCALE GENOMIC DNA]</scope>
    <source>
        <strain>ATCC 49405 / DSM 1227 / KCTC 32145 / OM5</strain>
    </source>
</reference>
<dbReference type="EMBL" id="CP001196">
    <property type="protein sequence ID" value="ACI92971.1"/>
    <property type="molecule type" value="Genomic_DNA"/>
</dbReference>
<dbReference type="EMBL" id="CP002826">
    <property type="protein sequence ID" value="AEI06874.1"/>
    <property type="molecule type" value="Genomic_DNA"/>
</dbReference>
<dbReference type="RefSeq" id="WP_012562998.1">
    <property type="nucleotide sequence ID" value="NC_015684.1"/>
</dbReference>
<dbReference type="SMR" id="B6JGG5"/>
<dbReference type="STRING" id="504832.OCA5_c21710"/>
<dbReference type="KEGG" id="oca:OCAR_5846"/>
<dbReference type="KEGG" id="ocg:OCA5_c21710"/>
<dbReference type="PATRIC" id="fig|504832.7.peg.2293"/>
<dbReference type="eggNOG" id="COG1381">
    <property type="taxonomic scope" value="Bacteria"/>
</dbReference>
<dbReference type="HOGENOM" id="CLU_086029_0_0_5"/>
<dbReference type="OrthoDB" id="9804792at2"/>
<dbReference type="Proteomes" id="UP000007730">
    <property type="component" value="Chromosome"/>
</dbReference>
<dbReference type="GO" id="GO:0043590">
    <property type="term" value="C:bacterial nucleoid"/>
    <property type="evidence" value="ECO:0007669"/>
    <property type="project" value="TreeGrafter"/>
</dbReference>
<dbReference type="GO" id="GO:0006310">
    <property type="term" value="P:DNA recombination"/>
    <property type="evidence" value="ECO:0007669"/>
    <property type="project" value="UniProtKB-UniRule"/>
</dbReference>
<dbReference type="GO" id="GO:0006302">
    <property type="term" value="P:double-strand break repair"/>
    <property type="evidence" value="ECO:0007669"/>
    <property type="project" value="TreeGrafter"/>
</dbReference>
<dbReference type="Gene3D" id="2.40.50.140">
    <property type="entry name" value="Nucleic acid-binding proteins"/>
    <property type="match status" value="1"/>
</dbReference>
<dbReference type="Gene3D" id="1.20.1440.120">
    <property type="entry name" value="Recombination protein O, C-terminal domain"/>
    <property type="match status" value="1"/>
</dbReference>
<dbReference type="HAMAP" id="MF_00201">
    <property type="entry name" value="RecO"/>
    <property type="match status" value="1"/>
</dbReference>
<dbReference type="InterPro" id="IPR037278">
    <property type="entry name" value="ARFGAP/RecO"/>
</dbReference>
<dbReference type="InterPro" id="IPR022572">
    <property type="entry name" value="DNA_rep/recomb_RecO_N"/>
</dbReference>
<dbReference type="InterPro" id="IPR012340">
    <property type="entry name" value="NA-bd_OB-fold"/>
</dbReference>
<dbReference type="InterPro" id="IPR003717">
    <property type="entry name" value="RecO"/>
</dbReference>
<dbReference type="InterPro" id="IPR042242">
    <property type="entry name" value="RecO_C"/>
</dbReference>
<dbReference type="NCBIfam" id="TIGR00613">
    <property type="entry name" value="reco"/>
    <property type="match status" value="1"/>
</dbReference>
<dbReference type="PANTHER" id="PTHR33991">
    <property type="entry name" value="DNA REPAIR PROTEIN RECO"/>
    <property type="match status" value="1"/>
</dbReference>
<dbReference type="PANTHER" id="PTHR33991:SF1">
    <property type="entry name" value="DNA REPAIR PROTEIN RECO"/>
    <property type="match status" value="1"/>
</dbReference>
<dbReference type="Pfam" id="PF02565">
    <property type="entry name" value="RecO_C"/>
    <property type="match status" value="1"/>
</dbReference>
<dbReference type="Pfam" id="PF11967">
    <property type="entry name" value="RecO_N"/>
    <property type="match status" value="1"/>
</dbReference>
<dbReference type="SUPFAM" id="SSF57863">
    <property type="entry name" value="ArfGap/RecO-like zinc finger"/>
    <property type="match status" value="1"/>
</dbReference>
<dbReference type="SUPFAM" id="SSF50249">
    <property type="entry name" value="Nucleic acid-binding proteins"/>
    <property type="match status" value="1"/>
</dbReference>
<name>RECO_AFIC5</name>
<evidence type="ECO:0000255" key="1">
    <source>
        <dbReference type="HAMAP-Rule" id="MF_00201"/>
    </source>
</evidence>